<evidence type="ECO:0000250" key="1">
    <source>
        <dbReference type="UniProtKB" id="A7LXU0"/>
    </source>
</evidence>
<evidence type="ECO:0000269" key="2">
    <source>
    </source>
</evidence>
<evidence type="ECO:0000305" key="3"/>
<proteinExistence type="evidence at protein level"/>
<dbReference type="EC" id="3.2.1.72"/>
<dbReference type="EMBL" id="AB300564">
    <property type="protein sequence ID" value="BAF98235.1"/>
    <property type="molecule type" value="mRNA"/>
</dbReference>
<dbReference type="SMR" id="A9ZND1"/>
<dbReference type="CAZy" id="GH43">
    <property type="family name" value="Glycoside Hydrolase Family 43"/>
</dbReference>
<dbReference type="BioCyc" id="MetaCyc:MONOMER-16529"/>
<dbReference type="BRENDA" id="3.2.1.72">
    <property type="organism ID" value="6640"/>
</dbReference>
<dbReference type="GO" id="GO:0033914">
    <property type="term" value="F:xylan 1,3-beta-xylosidase activity"/>
    <property type="evidence" value="ECO:0000314"/>
    <property type="project" value="UniProtKB"/>
</dbReference>
<dbReference type="GO" id="GO:0005975">
    <property type="term" value="P:carbohydrate metabolic process"/>
    <property type="evidence" value="ECO:0000314"/>
    <property type="project" value="UniProtKB"/>
</dbReference>
<dbReference type="CDD" id="cd09000">
    <property type="entry name" value="GH43_SXA-like"/>
    <property type="match status" value="1"/>
</dbReference>
<dbReference type="Gene3D" id="2.60.120.200">
    <property type="match status" value="1"/>
</dbReference>
<dbReference type="Gene3D" id="2.115.10.20">
    <property type="entry name" value="Glycosyl hydrolase domain, family 43"/>
    <property type="match status" value="1"/>
</dbReference>
<dbReference type="InterPro" id="IPR013320">
    <property type="entry name" value="ConA-like_dom_sf"/>
</dbReference>
<dbReference type="InterPro" id="IPR041542">
    <property type="entry name" value="GH43_C2"/>
</dbReference>
<dbReference type="InterPro" id="IPR006710">
    <property type="entry name" value="Glyco_hydro_43"/>
</dbReference>
<dbReference type="InterPro" id="IPR023296">
    <property type="entry name" value="Glyco_hydro_beta-prop_sf"/>
</dbReference>
<dbReference type="InterPro" id="IPR051795">
    <property type="entry name" value="Glycosyl_Hydrlase_43"/>
</dbReference>
<dbReference type="PANTHER" id="PTHR42812">
    <property type="entry name" value="BETA-XYLOSIDASE"/>
    <property type="match status" value="1"/>
</dbReference>
<dbReference type="PANTHER" id="PTHR42812:SF12">
    <property type="entry name" value="BETA-XYLOSIDASE-RELATED"/>
    <property type="match status" value="1"/>
</dbReference>
<dbReference type="Pfam" id="PF17851">
    <property type="entry name" value="GH43_C2"/>
    <property type="match status" value="1"/>
</dbReference>
<dbReference type="Pfam" id="PF04616">
    <property type="entry name" value="Glyco_hydro_43"/>
    <property type="match status" value="1"/>
</dbReference>
<dbReference type="SUPFAM" id="SSF75005">
    <property type="entry name" value="Arabinanase/levansucrase/invertase"/>
    <property type="match status" value="1"/>
</dbReference>
<dbReference type="SUPFAM" id="SSF49899">
    <property type="entry name" value="Concanavalin A-like lectins/glucanases"/>
    <property type="match status" value="1"/>
</dbReference>
<gene>
    <name type="primary">xloA</name>
</gene>
<protein>
    <recommendedName>
        <fullName>Xylan 1,3-beta-xylosidase</fullName>
        <ecNumber>3.2.1.72</ecNumber>
    </recommendedName>
</protein>
<comment type="function">
    <text evidence="2">Beta-1,3-xylosidase that hydrolyzes beta-1,3-xylooligosaccharides to D-xylose.</text>
</comment>
<comment type="catalytic activity">
    <reaction evidence="2">
        <text>Hydrolysis of successive xylose residues from the non-reducing termini of (1-&gt;3)-beta-D-xylans.</text>
        <dbReference type="EC" id="3.2.1.72"/>
    </reaction>
</comment>
<comment type="activity regulation">
    <text evidence="2">Inhibited by Ag(+), Cu(2+), Hg(2+), Mn(2+), Pb(2+), Zn(2+) and p-chloromercuric benzoic acid.</text>
</comment>
<comment type="biophysicochemical properties">
    <kinetics>
        <KM evidence="2">0.244 mM for p-nitrophenyl-beta-D-xylopyranoside</KM>
        <Vmax evidence="2">1.82 umol/min/mg enzyme with p-nitrophenyl-beta-D-xylopyranoside as substrate</Vmax>
    </kinetics>
    <phDependence>
        <text evidence="2">Optimum pH is 7.0.</text>
    </phDependence>
    <temperatureDependence>
        <text evidence="2">Optimum temperature is 35 degrees Celsius.</text>
    </temperatureDependence>
</comment>
<comment type="similarity">
    <text evidence="3">Belongs to the glycosyl hydrolase 43 family.</text>
</comment>
<keyword id="KW-0903">Direct protein sequencing</keyword>
<keyword id="KW-0326">Glycosidase</keyword>
<keyword id="KW-0378">Hydrolase</keyword>
<name>XLOA_VIBSX</name>
<feature type="initiator methionine" description="Removed" evidence="2">
    <location>
        <position position="1"/>
    </location>
</feature>
<feature type="chain" id="PRO_0000430455" description="Xylan 1,3-beta-xylosidase">
    <location>
        <begin position="2"/>
        <end position="535"/>
    </location>
</feature>
<feature type="active site" description="Proton acceptor" evidence="1">
    <location>
        <position position="16"/>
    </location>
</feature>
<feature type="active site" description="Proton donor" evidence="1">
    <location>
        <position position="189"/>
    </location>
</feature>
<feature type="site" description="Important for catalytic activity, responsible for pKa modulation of the active site Glu and correct orientation of both the proton donor and substrate" evidence="1">
    <location>
        <position position="130"/>
    </location>
</feature>
<reference key="1">
    <citation type="journal article" date="2008" name="Appl. Environ. Microbiol.">
        <title>Cloning of a novel gene encoding beta-1,3-xylosidase from a marine bacterium, Vibrio sp. strain XY-214, and characterization of the gene product.</title>
        <authorList>
            <person name="Umemoto Y."/>
            <person name="Onishi R."/>
            <person name="Araki T."/>
        </authorList>
    </citation>
    <scope>NUCLEOTIDE SEQUENCE [GENOMIC DNA]</scope>
    <scope>PROTEIN SEQUENCE OF 2-21 AND 357-376</scope>
    <scope>FUNCTION</scope>
    <scope>CATALYTIC ACTIVITY</scope>
    <scope>BIOPHYSICOCHEMICAL PROPERTIES</scope>
    <scope>ACTIVITY REGULATION</scope>
    <source>
        <strain>XY-214</strain>
    </source>
</reference>
<reference key="2">
    <citation type="journal article" date="2014" name="PLoS ONE">
        <title>Finding sequences for over 270 orphan enzymes.</title>
        <authorList>
            <person name="Shearer A.G."/>
            <person name="Altman T."/>
            <person name="Rhee C.D."/>
        </authorList>
    </citation>
    <scope>IDENTIFICATION</scope>
</reference>
<accession>A9ZND1</accession>
<sequence>MTTTIQNPILKGFNPDPSIVRVGDDYYIATSTFEWFPGIQLHHSRDLINWRLVGHALTRTSQLNMMGMDNSEGVYAPALTYSDGTFWLCFSNVHSCRGGNWMATPSYVVTADSIEGPWSEPVPIGNYGFDPSLFHDDDGKKYMLNMIWGGRAKTNFFGGIIMQEFDADEGKLVGAPKTVFEGTELGCTEGPQLLKKDDYYYLITAEGGTERNHAVTVCRSKHIWGPYEVHPENPILTSRFQEHAELSRAGHGFLVETQTGEWYMSHLCGRRIPNPEGYQFMPKYDNGFSILGRESALQKAHWQDDWPYIATGKTPVVEVEAPNLPLHPWPESPARDEFIDPTLSLISTLREPVSEKWLSLSERPGFLRLKGRHYLYSRYEQSMVARRFQAHNATVETKLEFKPNTPYEMAGLCAYYARNGHYFLKMTANDLGERVLQVVGNINDVYGEYSNDVVIGDADTVYMRLELKTQWYQYSYSLDGVDWYEIGPALNSTPLSDEGGPDIFRFTGSFAALFVADITGQKRHADFDYFEYLEH</sequence>
<organism>
    <name type="scientific">Vibrio sp</name>
    <dbReference type="NCBI Taxonomy" id="678"/>
    <lineage>
        <taxon>Bacteria</taxon>
        <taxon>Pseudomonadati</taxon>
        <taxon>Pseudomonadota</taxon>
        <taxon>Gammaproteobacteria</taxon>
        <taxon>Vibrionales</taxon>
        <taxon>Vibrionaceae</taxon>
        <taxon>Vibrio</taxon>
    </lineage>
</organism>